<comment type="function">
    <text evidence="4 5 6 7">Multifunctional transcription factor that induces cell cycle arrest, DNA repair or apoptosis upon binding to its target DNA sequence. Acts as a tumor suppressor in many tumor types; induces growth arrest or apoptosis depending on the physiological circumstances and cell type. Negatively regulates cell division by controlling expression of a set of genes required for this process. One of the activated genes is an inhibitor of cyclin-dependent kinases. Apoptosis induction seems to be mediated either by stimulation of bax and fas antigen expression, or by repression of Bcl-2 expression. Positively regulates apoptosis in the early-stage embryo in response to UV irradiation (PubMed:15529176).</text>
</comment>
<comment type="cofactor">
    <cofactor evidence="1">
        <name>Zn(2+)</name>
        <dbReference type="ChEBI" id="CHEBI:29105"/>
    </cofactor>
    <text evidence="1">Binds 1 zinc ion per subunit.</text>
</comment>
<comment type="subunit">
    <text evidence="1">Binds DNA as a homotetramer.</text>
</comment>
<comment type="subcellular location">
    <subcellularLocation>
        <location evidence="1">Cytoplasm</location>
    </subcellularLocation>
    <subcellularLocation>
        <location evidence="1">Nucleus</location>
    </subcellularLocation>
</comment>
<comment type="domain">
    <text evidence="2">The N-terminal and C-terminal disordered regions undergo liquid-liquid phase separation (LLPS) following homotetramerization and activation. Post-translational modifications, such as phosphorylation or lactylation affect the ability to undergo LLPS.</text>
</comment>
<comment type="domain">
    <text evidence="2">The nuclear export signal acts as a transcriptional repression domain. The TADI and TADII motifs (residues 17 to 25 and 48 to 56) correspond both to 9aaTAD motifs which are transactivation domains present in a large number of yeast and animal transcription factors.</text>
</comment>
<comment type="disruption phenotype">
    <text evidence="5 7 8">Morpholino knockdowns show a decrease in apoptosis in response to UV irradiation during late blastula stage embryos (4hpf) (PubMed:15529176). Loss of mdm2 transcription increase in response to UV irradiation (PubMed:15529176). No effect on expression of perp in the eyes, midbrain and gut at 36 hpf (PubMed:15529176). Decrease in endothelial cell apoptosis in the absence of blood flow (PubMed:27834691). In double morpholino knockdown of tp53 and yju2, tp53 deficiency rescues animals from developmental neurodegeneration observed on yju2 mutants and radiosensitivity.</text>
</comment>
<comment type="similarity">
    <text evidence="9">Belongs to the p53 family.</text>
</comment>
<evidence type="ECO:0000250" key="1"/>
<evidence type="ECO:0000250" key="2">
    <source>
        <dbReference type="UniProtKB" id="P04637"/>
    </source>
</evidence>
<evidence type="ECO:0000256" key="3">
    <source>
        <dbReference type="SAM" id="MobiDB-lite"/>
    </source>
</evidence>
<evidence type="ECO:0000269" key="4">
    <source>
    </source>
</evidence>
<evidence type="ECO:0000269" key="5">
    <source>
    </source>
</evidence>
<evidence type="ECO:0000269" key="6">
    <source>
    </source>
</evidence>
<evidence type="ECO:0000269" key="7">
    <source>
    </source>
</evidence>
<evidence type="ECO:0000269" key="8">
    <source>
    </source>
</evidence>
<evidence type="ECO:0000305" key="9"/>
<evidence type="ECO:0007829" key="10">
    <source>
        <dbReference type="PDB" id="4CZ5"/>
    </source>
</evidence>
<dbReference type="EMBL" id="U60804">
    <property type="protein sequence ID" value="AAB40617.1"/>
    <property type="molecule type" value="mRNA"/>
</dbReference>
<dbReference type="EMBL" id="AF365873">
    <property type="protein sequence ID" value="AAO85406.1"/>
    <property type="molecule type" value="mRNA"/>
</dbReference>
<dbReference type="EMBL" id="U46693">
    <property type="protein sequence ID" value="AAA97408.1"/>
    <property type="molecule type" value="mRNA"/>
</dbReference>
<dbReference type="RefSeq" id="NP_571402.1">
    <property type="nucleotide sequence ID" value="NM_131327.2"/>
</dbReference>
<dbReference type="PDB" id="4CZ5">
    <property type="method" value="X-ray"/>
    <property type="resolution" value="1.02 A"/>
    <property type="chains" value="A/B/C/D=301-330"/>
</dbReference>
<dbReference type="PDB" id="4CZ6">
    <property type="method" value="X-ray"/>
    <property type="resolution" value="1.53 A"/>
    <property type="chains" value="A/B/C/D=301-330"/>
</dbReference>
<dbReference type="PDB" id="4CZ7">
    <property type="method" value="X-ray"/>
    <property type="resolution" value="1.10 A"/>
    <property type="chains" value="A/B/C/D/E/F=301-330"/>
</dbReference>
<dbReference type="PDBsum" id="4CZ5"/>
<dbReference type="PDBsum" id="4CZ6"/>
<dbReference type="PDBsum" id="4CZ7"/>
<dbReference type="SMR" id="P79734"/>
<dbReference type="BioGRID" id="78756">
    <property type="interactions" value="2"/>
</dbReference>
<dbReference type="FunCoup" id="P79734">
    <property type="interactions" value="2133"/>
</dbReference>
<dbReference type="STRING" id="7955.ENSDARP00000116736"/>
<dbReference type="PaxDb" id="7955-ENSDARP00000051548"/>
<dbReference type="Ensembl" id="ENSDART00000177458">
    <property type="protein sequence ID" value="ENSDARP00000144168"/>
    <property type="gene ID" value="ENSDARG00000035559"/>
</dbReference>
<dbReference type="GeneID" id="30590"/>
<dbReference type="KEGG" id="dre:30590"/>
<dbReference type="AGR" id="ZFIN:ZDB-GENE-990415-270"/>
<dbReference type="CTD" id="7157"/>
<dbReference type="ZFIN" id="ZDB-GENE-990415-270">
    <property type="gene designation" value="tp53"/>
</dbReference>
<dbReference type="eggNOG" id="ENOG502QVY3">
    <property type="taxonomic scope" value="Eukaryota"/>
</dbReference>
<dbReference type="InParanoid" id="P79734"/>
<dbReference type="OrthoDB" id="5915660at2759"/>
<dbReference type="Reactome" id="R-DRE-2559580">
    <property type="pathway name" value="Oxidative Stress Induced Senescence"/>
</dbReference>
<dbReference type="Reactome" id="R-DRE-2559585">
    <property type="pathway name" value="Oncogene Induced Senescence"/>
</dbReference>
<dbReference type="Reactome" id="R-DRE-349425">
    <property type="pathway name" value="Autodegradation of the E3 ubiquitin ligase COP1"/>
</dbReference>
<dbReference type="Reactome" id="R-DRE-5689880">
    <property type="pathway name" value="Ub-specific processing proteases"/>
</dbReference>
<dbReference type="Reactome" id="R-DRE-5689896">
    <property type="pathway name" value="Ovarian tumor domain proteases"/>
</dbReference>
<dbReference type="Reactome" id="R-DRE-6804754">
    <property type="pathway name" value="Regulation of TP53 Expression"/>
</dbReference>
<dbReference type="Reactome" id="R-DRE-6804756">
    <property type="pathway name" value="Regulation of TP53 Activity through Phosphorylation"/>
</dbReference>
<dbReference type="Reactome" id="R-DRE-6804757">
    <property type="pathway name" value="Regulation of TP53 Degradation"/>
</dbReference>
<dbReference type="Reactome" id="R-DRE-6804758">
    <property type="pathway name" value="Regulation of TP53 Activity through Acetylation"/>
</dbReference>
<dbReference type="Reactome" id="R-DRE-6804759">
    <property type="pathway name" value="Regulation of TP53 Activity through Association with Co-factors"/>
</dbReference>
<dbReference type="Reactome" id="R-DRE-6804760">
    <property type="pathway name" value="Regulation of TP53 Activity through Methylation"/>
</dbReference>
<dbReference type="Reactome" id="R-DRE-69481">
    <property type="pathway name" value="G2/M Checkpoints"/>
</dbReference>
<dbReference type="Reactome" id="R-DRE-69541">
    <property type="pathway name" value="Stabilization of p53"/>
</dbReference>
<dbReference type="Reactome" id="R-DRE-8852276">
    <property type="pathway name" value="The role of GTSE1 in G2/M progression after G2 checkpoint"/>
</dbReference>
<dbReference type="Reactome" id="R-DRE-8941855">
    <property type="pathway name" value="RUNX3 regulates CDKN1A transcription"/>
</dbReference>
<dbReference type="Reactome" id="R-DRE-9833482">
    <property type="pathway name" value="PKR-mediated signaling"/>
</dbReference>
<dbReference type="EvolutionaryTrace" id="P79734"/>
<dbReference type="PRO" id="PR:P79734"/>
<dbReference type="Proteomes" id="UP000000437">
    <property type="component" value="Alternate scaffold 5"/>
</dbReference>
<dbReference type="Proteomes" id="UP000000437">
    <property type="component" value="Chromosome 5"/>
</dbReference>
<dbReference type="Bgee" id="ENSDARG00000035559">
    <property type="expression patterns" value="Expressed in cleaving embryo and 25 other cell types or tissues"/>
</dbReference>
<dbReference type="ExpressionAtlas" id="P79734">
    <property type="expression patterns" value="baseline and differential"/>
</dbReference>
<dbReference type="GO" id="GO:0000785">
    <property type="term" value="C:chromatin"/>
    <property type="evidence" value="ECO:0000314"/>
    <property type="project" value="ZFIN"/>
</dbReference>
<dbReference type="GO" id="GO:0005737">
    <property type="term" value="C:cytoplasm"/>
    <property type="evidence" value="ECO:0000250"/>
    <property type="project" value="UniProtKB"/>
</dbReference>
<dbReference type="GO" id="GO:0005739">
    <property type="term" value="C:mitochondrion"/>
    <property type="evidence" value="ECO:0000250"/>
    <property type="project" value="UniProtKB"/>
</dbReference>
<dbReference type="GO" id="GO:0005634">
    <property type="term" value="C:nucleus"/>
    <property type="evidence" value="ECO:0000250"/>
    <property type="project" value="UniProtKB"/>
</dbReference>
<dbReference type="GO" id="GO:0003700">
    <property type="term" value="F:DNA-binding transcription factor activity"/>
    <property type="evidence" value="ECO:0000314"/>
    <property type="project" value="ZFIN"/>
</dbReference>
<dbReference type="GO" id="GO:0000981">
    <property type="term" value="F:DNA-binding transcription factor activity, RNA polymerase II-specific"/>
    <property type="evidence" value="ECO:0000318"/>
    <property type="project" value="GO_Central"/>
</dbReference>
<dbReference type="GO" id="GO:0046872">
    <property type="term" value="F:metal ion binding"/>
    <property type="evidence" value="ECO:0007669"/>
    <property type="project" value="UniProtKB-KW"/>
</dbReference>
<dbReference type="GO" id="GO:0140693">
    <property type="term" value="F:molecular condensate scaffold activity"/>
    <property type="evidence" value="ECO:0000250"/>
    <property type="project" value="UniProtKB"/>
</dbReference>
<dbReference type="GO" id="GO:1990841">
    <property type="term" value="F:promoter-specific chromatin binding"/>
    <property type="evidence" value="ECO:0000250"/>
    <property type="project" value="UniProtKB"/>
</dbReference>
<dbReference type="GO" id="GO:0000978">
    <property type="term" value="F:RNA polymerase II cis-regulatory region sequence-specific DNA binding"/>
    <property type="evidence" value="ECO:0000318"/>
    <property type="project" value="GO_Central"/>
</dbReference>
<dbReference type="GO" id="GO:0043565">
    <property type="term" value="F:sequence-specific DNA binding"/>
    <property type="evidence" value="ECO:0000314"/>
    <property type="project" value="ZFIN"/>
</dbReference>
<dbReference type="GO" id="GO:0006915">
    <property type="term" value="P:apoptotic process"/>
    <property type="evidence" value="ECO:0000315"/>
    <property type="project" value="ZFIN"/>
</dbReference>
<dbReference type="GO" id="GO:1902262">
    <property type="term" value="P:apoptotic process involved in blood vessel morphogenesis"/>
    <property type="evidence" value="ECO:0000315"/>
    <property type="project" value="ZFIN"/>
</dbReference>
<dbReference type="GO" id="GO:1902742">
    <property type="term" value="P:apoptotic process involved in development"/>
    <property type="evidence" value="ECO:0000315"/>
    <property type="project" value="ZFIN"/>
</dbReference>
<dbReference type="GO" id="GO:0006914">
    <property type="term" value="P:autophagy"/>
    <property type="evidence" value="ECO:0000316"/>
    <property type="project" value="ZFIN"/>
</dbReference>
<dbReference type="GO" id="GO:0071456">
    <property type="term" value="P:cellular response to hypoxia"/>
    <property type="evidence" value="ECO:0000315"/>
    <property type="project" value="ZFIN"/>
</dbReference>
<dbReference type="GO" id="GO:0090398">
    <property type="term" value="P:cellular senescence"/>
    <property type="evidence" value="ECO:0000316"/>
    <property type="project" value="ZFIN"/>
</dbReference>
<dbReference type="GO" id="GO:0060216">
    <property type="term" value="P:definitive hemopoiesis"/>
    <property type="evidence" value="ECO:0000316"/>
    <property type="project" value="ZFIN"/>
</dbReference>
<dbReference type="GO" id="GO:0000077">
    <property type="term" value="P:DNA damage checkpoint signaling"/>
    <property type="evidence" value="ECO:0000315"/>
    <property type="project" value="ZFIN"/>
</dbReference>
<dbReference type="GO" id="GO:0006974">
    <property type="term" value="P:DNA damage response"/>
    <property type="evidence" value="ECO:0000250"/>
    <property type="project" value="UniProtKB"/>
</dbReference>
<dbReference type="GO" id="GO:0030330">
    <property type="term" value="P:DNA damage response, signal transduction by p53 class mediator"/>
    <property type="evidence" value="ECO:0000315"/>
    <property type="project" value="ZFIN"/>
</dbReference>
<dbReference type="GO" id="GO:0048730">
    <property type="term" value="P:epidermis morphogenesis"/>
    <property type="evidence" value="ECO:0000315"/>
    <property type="project" value="ZFIN"/>
</dbReference>
<dbReference type="GO" id="GO:0048821">
    <property type="term" value="P:erythrocyte development"/>
    <property type="evidence" value="ECO:0000316"/>
    <property type="project" value="ZFIN"/>
</dbReference>
<dbReference type="GO" id="GO:0043249">
    <property type="term" value="P:erythrocyte maturation"/>
    <property type="evidence" value="ECO:0000316"/>
    <property type="project" value="ZFIN"/>
</dbReference>
<dbReference type="GO" id="GO:0061484">
    <property type="term" value="P:hematopoietic stem cell homeostasis"/>
    <property type="evidence" value="ECO:0000316"/>
    <property type="project" value="ZFIN"/>
</dbReference>
<dbReference type="GO" id="GO:0071425">
    <property type="term" value="P:hematopoietic stem cell proliferation"/>
    <property type="evidence" value="ECO:0000315"/>
    <property type="project" value="ZFIN"/>
</dbReference>
<dbReference type="GO" id="GO:0060729">
    <property type="term" value="P:intestinal epithelial structure maintenance"/>
    <property type="evidence" value="ECO:0000316"/>
    <property type="project" value="ZFIN"/>
</dbReference>
<dbReference type="GO" id="GO:0097193">
    <property type="term" value="P:intrinsic apoptotic signaling pathway"/>
    <property type="evidence" value="ECO:0000315"/>
    <property type="project" value="ZFIN"/>
</dbReference>
<dbReference type="GO" id="GO:0042771">
    <property type="term" value="P:intrinsic apoptotic signaling pathway in response to DNA damage by p53 class mediator"/>
    <property type="evidence" value="ECO:0000315"/>
    <property type="project" value="BHF-UCL"/>
</dbReference>
<dbReference type="GO" id="GO:0016525">
    <property type="term" value="P:negative regulation of angiogenesis"/>
    <property type="evidence" value="ECO:0000316"/>
    <property type="project" value="ZFIN"/>
</dbReference>
<dbReference type="GO" id="GO:0045786">
    <property type="term" value="P:negative regulation of cell cycle"/>
    <property type="evidence" value="ECO:0000315"/>
    <property type="project" value="ZFIN"/>
</dbReference>
<dbReference type="GO" id="GO:0051782">
    <property type="term" value="P:negative regulation of cell division"/>
    <property type="evidence" value="ECO:0000315"/>
    <property type="project" value="ZFIN"/>
</dbReference>
<dbReference type="GO" id="GO:0043065">
    <property type="term" value="P:positive regulation of apoptotic process"/>
    <property type="evidence" value="ECO:0000315"/>
    <property type="project" value="ZFIN"/>
</dbReference>
<dbReference type="GO" id="GO:0045787">
    <property type="term" value="P:positive regulation of cell cycle"/>
    <property type="evidence" value="ECO:0000315"/>
    <property type="project" value="ZFIN"/>
</dbReference>
<dbReference type="GO" id="GO:0045893">
    <property type="term" value="P:positive regulation of DNA-templated transcription"/>
    <property type="evidence" value="ECO:0000314"/>
    <property type="project" value="ZFIN"/>
</dbReference>
<dbReference type="GO" id="GO:0043525">
    <property type="term" value="P:positive regulation of neuron apoptotic process"/>
    <property type="evidence" value="ECO:0000316"/>
    <property type="project" value="ZFIN"/>
</dbReference>
<dbReference type="GO" id="GO:0045944">
    <property type="term" value="P:positive regulation of transcription by RNA polymerase II"/>
    <property type="evidence" value="ECO:0000250"/>
    <property type="project" value="UniProtKB"/>
</dbReference>
<dbReference type="GO" id="GO:0010623">
    <property type="term" value="P:programmed cell death involved in cell development"/>
    <property type="evidence" value="ECO:0000315"/>
    <property type="project" value="ZFIN"/>
</dbReference>
<dbReference type="GO" id="GO:0051262">
    <property type="term" value="P:protein tetramerization"/>
    <property type="evidence" value="ECO:0007669"/>
    <property type="project" value="InterPro"/>
</dbReference>
<dbReference type="GO" id="GO:0042127">
    <property type="term" value="P:regulation of cell population proliferation"/>
    <property type="evidence" value="ECO:0000316"/>
    <property type="project" value="ZFIN"/>
</dbReference>
<dbReference type="GO" id="GO:2000779">
    <property type="term" value="P:regulation of double-strand break repair"/>
    <property type="evidence" value="ECO:0000315"/>
    <property type="project" value="ZFIN"/>
</dbReference>
<dbReference type="GO" id="GO:1902253">
    <property type="term" value="P:regulation of intrinsic apoptotic signaling pathway by p53 class mediator"/>
    <property type="evidence" value="ECO:0000316"/>
    <property type="project" value="ZFIN"/>
</dbReference>
<dbReference type="GO" id="GO:1905879">
    <property type="term" value="P:regulation of oogenesis"/>
    <property type="evidence" value="ECO:0000316"/>
    <property type="project" value="ZFIN"/>
</dbReference>
<dbReference type="GO" id="GO:0031647">
    <property type="term" value="P:regulation of protein stability"/>
    <property type="evidence" value="ECO:0000316"/>
    <property type="project" value="ZFIN"/>
</dbReference>
<dbReference type="GO" id="GO:0006357">
    <property type="term" value="P:regulation of transcription by RNA polymerase II"/>
    <property type="evidence" value="ECO:0000315"/>
    <property type="project" value="ZFIN"/>
</dbReference>
<dbReference type="GO" id="GO:0051597">
    <property type="term" value="P:response to methylmercury"/>
    <property type="evidence" value="ECO:0000314"/>
    <property type="project" value="ZFIN"/>
</dbReference>
<dbReference type="GO" id="GO:0009411">
    <property type="term" value="P:response to UV"/>
    <property type="evidence" value="ECO:0000315"/>
    <property type="project" value="ZFIN"/>
</dbReference>
<dbReference type="GO" id="GO:0010165">
    <property type="term" value="P:response to X-ray"/>
    <property type="evidence" value="ECO:0000315"/>
    <property type="project" value="ZFIN"/>
</dbReference>
<dbReference type="GO" id="GO:0007283">
    <property type="term" value="P:spermatogenesis"/>
    <property type="evidence" value="ECO:0000316"/>
    <property type="project" value="ZFIN"/>
</dbReference>
<dbReference type="GO" id="GO:0007179">
    <property type="term" value="P:transforming growth factor beta receptor signaling pathway"/>
    <property type="evidence" value="ECO:0000315"/>
    <property type="project" value="ZFIN"/>
</dbReference>
<dbReference type="GO" id="GO:0010526">
    <property type="term" value="P:transposable element silencing"/>
    <property type="evidence" value="ECO:0000315"/>
    <property type="project" value="ZFIN"/>
</dbReference>
<dbReference type="CDD" id="cd08367">
    <property type="entry name" value="P53"/>
    <property type="match status" value="1"/>
</dbReference>
<dbReference type="FunFam" id="2.60.40.720:FF:000003">
    <property type="entry name" value="Cellular tumor antigen p53"/>
    <property type="match status" value="1"/>
</dbReference>
<dbReference type="FunFam" id="4.10.170.10:FF:000005">
    <property type="entry name" value="Cellular tumor antigen p53"/>
    <property type="match status" value="1"/>
</dbReference>
<dbReference type="Gene3D" id="2.60.40.720">
    <property type="match status" value="1"/>
</dbReference>
<dbReference type="Gene3D" id="4.10.170.10">
    <property type="entry name" value="p53-like tetramerisation domain"/>
    <property type="match status" value="1"/>
</dbReference>
<dbReference type="InterPro" id="IPR008967">
    <property type="entry name" value="p53-like_TF_DNA-bd_sf"/>
</dbReference>
<dbReference type="InterPro" id="IPR012346">
    <property type="entry name" value="p53/RUNT-type_TF_DNA-bd_sf"/>
</dbReference>
<dbReference type="InterPro" id="IPR011615">
    <property type="entry name" value="p53_DNA-bd"/>
</dbReference>
<dbReference type="InterPro" id="IPR036674">
    <property type="entry name" value="p53_tetramer_sf"/>
</dbReference>
<dbReference type="InterPro" id="IPR010991">
    <property type="entry name" value="p53_tetrameristn"/>
</dbReference>
<dbReference type="InterPro" id="IPR002117">
    <property type="entry name" value="p53_tumour_suppressor"/>
</dbReference>
<dbReference type="PANTHER" id="PTHR11447">
    <property type="entry name" value="CELLULAR TUMOR ANTIGEN P53"/>
    <property type="match status" value="1"/>
</dbReference>
<dbReference type="PANTHER" id="PTHR11447:SF6">
    <property type="entry name" value="CELLULAR TUMOR ANTIGEN P53"/>
    <property type="match status" value="1"/>
</dbReference>
<dbReference type="Pfam" id="PF00870">
    <property type="entry name" value="P53"/>
    <property type="match status" value="1"/>
</dbReference>
<dbReference type="Pfam" id="PF07710">
    <property type="entry name" value="P53_tetramer"/>
    <property type="match status" value="1"/>
</dbReference>
<dbReference type="PRINTS" id="PR00386">
    <property type="entry name" value="P53SUPPRESSR"/>
</dbReference>
<dbReference type="SUPFAM" id="SSF47719">
    <property type="entry name" value="p53 tetramerization domain"/>
    <property type="match status" value="1"/>
</dbReference>
<dbReference type="SUPFAM" id="SSF49417">
    <property type="entry name" value="p53-like transcription factors"/>
    <property type="match status" value="1"/>
</dbReference>
<dbReference type="PROSITE" id="PS00348">
    <property type="entry name" value="P53"/>
    <property type="match status" value="1"/>
</dbReference>
<gene>
    <name type="primary">tp53</name>
    <name type="synonym">drp53</name>
</gene>
<organism>
    <name type="scientific">Danio rerio</name>
    <name type="common">Zebrafish</name>
    <name type="synonym">Brachydanio rerio</name>
    <dbReference type="NCBI Taxonomy" id="7955"/>
    <lineage>
        <taxon>Eukaryota</taxon>
        <taxon>Metazoa</taxon>
        <taxon>Chordata</taxon>
        <taxon>Craniata</taxon>
        <taxon>Vertebrata</taxon>
        <taxon>Euteleostomi</taxon>
        <taxon>Actinopterygii</taxon>
        <taxon>Neopterygii</taxon>
        <taxon>Teleostei</taxon>
        <taxon>Ostariophysi</taxon>
        <taxon>Cypriniformes</taxon>
        <taxon>Danionidae</taxon>
        <taxon>Danioninae</taxon>
        <taxon>Danio</taxon>
    </lineage>
</organism>
<sequence>MAQNDSQEFAELWEKNLIIQPPGGGSCWDIINDEEYLPGSFDPNFFENVLEEQPQPSTLPPTSTVPETSDYPGDHGFRLRFPQSGTAKSVTCTYSPDLNKLFCQLAKTCPVQMVVDVAPPQGSVVRATAIYKKSEHVAEVVRRCPHHERTPDGDNLAPAGHLIRVEGNQRANYREDNITLRHSVFVPYEAPQLGAEWTTVLLNYMCNSSCMGGMNRRPILTIITLETQEGQLLGRRSFEVRVCACPGRDRKTEESNFKKDQETKTMAKTTTGTKRSLVKESSSATLRPEGSKKAKGSSSDEEIFTLQVRGRERYEILKKLNDSLELSDVVPASDAEKYRQKFMTKNKKENRESSEPKQGKKLMVKDEGRSDSD</sequence>
<proteinExistence type="evidence at protein level"/>
<protein>
    <recommendedName>
        <fullName>Cellular tumor antigen p53</fullName>
    </recommendedName>
    <alternativeName>
        <fullName>Tumor suppressor p53</fullName>
    </alternativeName>
</protein>
<keyword id="KW-0002">3D-structure</keyword>
<keyword id="KW-0010">Activator</keyword>
<keyword id="KW-0053">Apoptosis</keyword>
<keyword id="KW-0131">Cell cycle</keyword>
<keyword id="KW-0963">Cytoplasm</keyword>
<keyword id="KW-0238">DNA-binding</keyword>
<keyword id="KW-0479">Metal-binding</keyword>
<keyword id="KW-0539">Nucleus</keyword>
<keyword id="KW-0597">Phosphoprotein</keyword>
<keyword id="KW-1185">Reference proteome</keyword>
<keyword id="KW-0804">Transcription</keyword>
<keyword id="KW-0805">Transcription regulation</keyword>
<keyword id="KW-0043">Tumor suppressor</keyword>
<keyword id="KW-0862">Zinc</keyword>
<feature type="chain" id="PRO_0000185718" description="Cellular tumor antigen p53">
    <location>
        <begin position="1"/>
        <end position="373"/>
    </location>
</feature>
<feature type="DNA-binding region" evidence="1">
    <location>
        <begin position="70"/>
        <end position="260"/>
    </location>
</feature>
<feature type="region of interest" description="Transcription activation (acidic)">
    <location>
        <begin position="1"/>
        <end position="31"/>
    </location>
</feature>
<feature type="region of interest" description="Disordered" evidence="3">
    <location>
        <begin position="52"/>
        <end position="80"/>
    </location>
</feature>
<feature type="region of interest" description="Interaction with DNA" evidence="1">
    <location>
        <begin position="241"/>
        <end position="248"/>
    </location>
</feature>
<feature type="region of interest" description="Disordered" evidence="3">
    <location>
        <begin position="250"/>
        <end position="301"/>
    </location>
</feature>
<feature type="region of interest" description="Oligomerization">
    <location>
        <begin position="301"/>
        <end position="332"/>
    </location>
</feature>
<feature type="region of interest" description="Disordered" evidence="3">
    <location>
        <begin position="329"/>
        <end position="373"/>
    </location>
</feature>
<feature type="region of interest" description="Basic (repression of DNA-binding)">
    <location>
        <begin position="345"/>
        <end position="366"/>
    </location>
</feature>
<feature type="short sequence motif" description="Bipartite nuclear localization signal" evidence="1">
    <location>
        <begin position="274"/>
        <end position="296"/>
    </location>
</feature>
<feature type="short sequence motif" description="Nuclear export signal" evidence="1">
    <location>
        <begin position="315"/>
        <end position="326"/>
    </location>
</feature>
<feature type="compositionally biased region" description="Low complexity" evidence="3">
    <location>
        <begin position="52"/>
        <end position="69"/>
    </location>
</feature>
<feature type="compositionally biased region" description="Basic and acidic residues" evidence="3">
    <location>
        <begin position="250"/>
        <end position="265"/>
    </location>
</feature>
<feature type="compositionally biased region" description="Basic and acidic residues" evidence="3">
    <location>
        <begin position="346"/>
        <end position="373"/>
    </location>
</feature>
<feature type="binding site" evidence="1">
    <location>
        <position position="144"/>
    </location>
    <ligand>
        <name>Zn(2+)</name>
        <dbReference type="ChEBI" id="CHEBI:29105"/>
    </ligand>
</feature>
<feature type="binding site" evidence="1">
    <location>
        <position position="147"/>
    </location>
    <ligand>
        <name>Zn(2+)</name>
        <dbReference type="ChEBI" id="CHEBI:29105"/>
    </ligand>
</feature>
<feature type="binding site" evidence="1">
    <location>
        <position position="206"/>
    </location>
    <ligand>
        <name>Zn(2+)</name>
        <dbReference type="ChEBI" id="CHEBI:29105"/>
    </ligand>
</feature>
<feature type="binding site" evidence="1">
    <location>
        <position position="210"/>
    </location>
    <ligand>
        <name>Zn(2+)</name>
        <dbReference type="ChEBI" id="CHEBI:29105"/>
    </ligand>
</feature>
<feature type="site" description="Interaction with DNA" evidence="1">
    <location>
        <position position="88"/>
    </location>
</feature>
<feature type="mutagenesis site" description="No effect on transactivation activity." evidence="6">
    <original>S</original>
    <variation>F</variation>
    <location>
        <position position="26"/>
    </location>
</feature>
<feature type="mutagenesis site" description="Loss of transactivation activity. Temperature-sensitive suppression of irradiation-induced apoptosis. No effect on embryonic development." evidence="6">
    <original>N</original>
    <variation>K</variation>
    <location>
        <position position="168"/>
    </location>
</feature>
<feature type="mutagenesis site" description="Loss of transactivation activity. Suppression of irradiation-induced apoptosis. Defective G1-phase but not G2-phase checkpoint response. Development of malignant peripheral nerve sheath tumors. No effect on embryonic development." evidence="6">
    <original>M</original>
    <variation>K</variation>
    <location>
        <position position="214"/>
    </location>
</feature>
<feature type="sequence conflict" description="In Ref. 2; AAO85406." evidence="9" ref="2">
    <original>SLVKE</original>
    <variation>K</variation>
    <location>
        <begin position="276"/>
        <end position="280"/>
    </location>
</feature>
<feature type="sequence conflict" description="In Ref. 2; AAO85406." evidence="9" ref="2">
    <original>L</original>
    <variation>S</variation>
    <location>
        <position position="286"/>
    </location>
</feature>
<feature type="strand" evidence="10">
    <location>
        <begin position="303"/>
        <end position="310"/>
    </location>
</feature>
<feature type="helix" evidence="10">
    <location>
        <begin position="311"/>
        <end position="326"/>
    </location>
</feature>
<reference key="1">
    <citation type="journal article" date="1997" name="Mol. Mar. Biol. Biotechnol.">
        <title>Zebrafish (Danio rerio) p53 tumor suppressor gene: cDNA sequence and expression during embryogenesis.</title>
        <authorList>
            <person name="Cheng R."/>
            <person name="Ford B.L."/>
            <person name="O'Neal P.E."/>
            <person name="Mathews C.Z."/>
            <person name="Bradford C.S."/>
            <person name="Thongtan T."/>
            <person name="Barnes D.W."/>
            <person name="Hendricks J.D."/>
            <person name="Bailey G.S."/>
        </authorList>
    </citation>
    <scope>NUCLEOTIDE SEQUENCE [MRNA]</scope>
</reference>
<reference key="2">
    <citation type="submission" date="2001-03" db="EMBL/GenBank/DDBJ databases">
        <title>Isolation of p53 in the zebrafish.</title>
        <authorList>
            <person name="Bauer M.P."/>
            <person name="Goetz F.W."/>
        </authorList>
    </citation>
    <scope>NUCLEOTIDE SEQUENCE [MRNA]</scope>
</reference>
<reference key="3">
    <citation type="submission" date="1996-01" db="EMBL/GenBank/DDBJ databases">
        <authorList>
            <person name="Winge P."/>
        </authorList>
    </citation>
    <scope>NUCLEOTIDE SEQUENCE [MRNA] OF 140-212</scope>
</reference>
<reference key="4">
    <citation type="journal article" date="2002" name="Curr. Biol.">
        <title>Zebrafish as a model organism for the identification and characterization of drugs and genes affecting p53 signaling.</title>
        <authorList>
            <person name="Langheinrich U."/>
            <person name="Hennen E."/>
            <person name="Stott G."/>
            <person name="Vacun G."/>
        </authorList>
    </citation>
    <scope>FUNCTION</scope>
</reference>
<reference key="5">
    <citation type="journal article" date="2005" name="Cell Death Differ.">
        <title>Perp is required for tissue-specific cell survival during zebrafish development.</title>
        <authorList>
            <person name="Nowak M."/>
            <person name="Koester C."/>
            <person name="Hammerschmidt M."/>
        </authorList>
    </citation>
    <scope>FUNCTION</scope>
    <scope>DISRUPTION PHENOTYPE</scope>
</reference>
<reference key="6">
    <citation type="journal article" date="2005" name="Proc. Natl. Acad. Sci. U.S.A.">
        <title>tp53 mutant zebrafish develop malignant peripheral nerve sheath tumors.</title>
        <authorList>
            <person name="Berghmans S."/>
            <person name="Murphey R.D."/>
            <person name="Wienholds E."/>
            <person name="Neuberg D."/>
            <person name="Kutok J.L."/>
            <person name="Fletcher C.D.M."/>
            <person name="Morris J.P."/>
            <person name="Liu T.X."/>
            <person name="Schulte-Merker S."/>
            <person name="Kanki J.P."/>
            <person name="Plasterk R."/>
            <person name="Zon L.I."/>
            <person name="Look A.T."/>
        </authorList>
    </citation>
    <scope>FUNCTION</scope>
    <scope>MUTAGENESIS OF SER-26; ASN-168 AND MET-214</scope>
</reference>
<reference key="7">
    <citation type="journal article" date="2012" name="PLoS Genet.">
        <title>Ccdc94 protects cells from ionizing radiation by inhibiting the expression of p53.</title>
        <authorList>
            <person name="Sorrells S."/>
            <person name="Carbonneau S."/>
            <person name="Harrington E."/>
            <person name="Chen A.T."/>
            <person name="Hast B."/>
            <person name="Milash B."/>
            <person name="Pyati U."/>
            <person name="Major M.B."/>
            <person name="Zhou Y."/>
            <person name="Zon L.I."/>
            <person name="Stewart R.A."/>
            <person name="Look A.T."/>
            <person name="Jette C."/>
        </authorList>
    </citation>
    <scope>FUNCTION</scope>
    <scope>DISRUPTION PHENOTYPE</scope>
</reference>
<reference key="8">
    <citation type="journal article" date="2017" name="Arterioscler. Thromb. Vasc. Biol.">
        <title>Zebrafish Model for Functional Screening of Flow-Responsive Genes.</title>
        <authorList>
            <person name="Serbanovic-Canic J."/>
            <person name="de Luca A."/>
            <person name="Warboys C."/>
            <person name="Ferreira P.F."/>
            <person name="Luong L.A."/>
            <person name="Hsiao S."/>
            <person name="Gauci I."/>
            <person name="Mahmoud M."/>
            <person name="Feng S."/>
            <person name="Souilhol C."/>
            <person name="Bowden N."/>
            <person name="Ashton J.P."/>
            <person name="Walczak H."/>
            <person name="Firmin D."/>
            <person name="Krams R."/>
            <person name="Mason J.C."/>
            <person name="Haskard D.O."/>
            <person name="Sherwin S."/>
            <person name="Ridger V."/>
            <person name="Chico T.J."/>
            <person name="Evans P.C."/>
        </authorList>
    </citation>
    <scope>DISRUPTION PHENOTYPE</scope>
</reference>
<name>P53_DANRE</name>
<accession>P79734</accession>
<accession>Q7ZW62</accession>
<accession>Q90440</accession>